<dbReference type="EMBL" id="EU311552">
    <property type="protein sequence ID" value="ACA09642.1"/>
    <property type="molecule type" value="mRNA"/>
</dbReference>
<dbReference type="GO" id="GO:0005576">
    <property type="term" value="C:extracellular region"/>
    <property type="evidence" value="ECO:0007669"/>
    <property type="project" value="UniProtKB-SubCell"/>
</dbReference>
<dbReference type="GO" id="GO:0042742">
    <property type="term" value="P:defense response to bacterium"/>
    <property type="evidence" value="ECO:0007669"/>
    <property type="project" value="UniProtKB-KW"/>
</dbReference>
<dbReference type="GO" id="GO:0050832">
    <property type="term" value="P:defense response to fungus"/>
    <property type="evidence" value="ECO:0007669"/>
    <property type="project" value="UniProtKB-KW"/>
</dbReference>
<dbReference type="GO" id="GO:0045087">
    <property type="term" value="P:innate immune response"/>
    <property type="evidence" value="ECO:0007669"/>
    <property type="project" value="UniProtKB-KW"/>
</dbReference>
<dbReference type="GO" id="GO:0031640">
    <property type="term" value="P:killing of cells of another organism"/>
    <property type="evidence" value="ECO:0007669"/>
    <property type="project" value="UniProtKB-KW"/>
</dbReference>
<dbReference type="InterPro" id="IPR004275">
    <property type="entry name" value="Frog_antimicrobial_propeptide"/>
</dbReference>
<dbReference type="Pfam" id="PF03032">
    <property type="entry name" value="FSAP_sig_propep"/>
    <property type="match status" value="1"/>
</dbReference>
<protein>
    <recommendedName>
        <fullName evidence="3">Temporin-ALg</fullName>
    </recommendedName>
    <alternativeName>
        <fullName evidence="6">Amolopin-2h</fullName>
    </alternativeName>
</protein>
<name>TPG_AMOLO</name>
<comment type="function">
    <text evidence="2">Antimicrobial peptide with activity against Gram-positive and Gram-negative bacteria and against fungi (PubMed:19843479). Has been tested against S.aureus (MIC=2.5 ug/mL), B.pumilus (MIC=2.5 ug/mL), B.cereus (MIC=30.0 ug/mL), E.coli (MIC=5.0 ug/mL), B.dysenteriae (MIC=10.0 ug/mL), A.cacoaceticus (MIC=30.0 ug/mL), P.aeruginosa (MIC=7.5 ug/mL) and C.albicans (MIC=1.25 ug/mL) (PubMed:19843479). Also shows a weak hemolytic activity (PubMed:19843479).</text>
</comment>
<comment type="subcellular location">
    <subcellularLocation>
        <location evidence="5">Secreted</location>
    </subcellularLocation>
</comment>
<comment type="tissue specificity">
    <text evidence="5">Expressed by the skin glands.</text>
</comment>
<comment type="similarity">
    <text evidence="4">Belongs to the frog skin active peptide (FSAP) family. Temporin subfamily.</text>
</comment>
<comment type="online information" name="The antimicrobial peptide database">
    <link uri="https://wangapd3.com/database/query_output.php?ID=01934"/>
</comment>
<organism>
    <name type="scientific">Amolops loloensis</name>
    <name type="common">Lolokou Sucker Frog</name>
    <name type="synonym">Staurois loloensis</name>
    <dbReference type="NCBI Taxonomy" id="318551"/>
    <lineage>
        <taxon>Eukaryota</taxon>
        <taxon>Metazoa</taxon>
        <taxon>Chordata</taxon>
        <taxon>Craniata</taxon>
        <taxon>Vertebrata</taxon>
        <taxon>Euteleostomi</taxon>
        <taxon>Amphibia</taxon>
        <taxon>Batrachia</taxon>
        <taxon>Anura</taxon>
        <taxon>Neobatrachia</taxon>
        <taxon>Ranoidea</taxon>
        <taxon>Ranidae</taxon>
        <taxon>Amolops</taxon>
    </lineage>
</organism>
<evidence type="ECO:0000255" key="1"/>
<evidence type="ECO:0000269" key="2">
    <source>
    </source>
</evidence>
<evidence type="ECO:0000303" key="3">
    <source>
    </source>
</evidence>
<evidence type="ECO:0000305" key="4"/>
<evidence type="ECO:0000305" key="5">
    <source>
    </source>
</evidence>
<evidence type="ECO:0000312" key="6">
    <source>
        <dbReference type="EMBL" id="ACA09642.1"/>
    </source>
</evidence>
<feature type="signal peptide" evidence="1">
    <location>
        <begin position="1"/>
        <end position="22"/>
    </location>
</feature>
<feature type="propeptide" id="PRO_0000450006" evidence="5">
    <location>
        <begin position="23"/>
        <end position="46"/>
    </location>
</feature>
<feature type="peptide" id="PRO_5005667979" description="Temporin-ALg">
    <location>
        <begin position="47"/>
        <end position="62"/>
    </location>
</feature>
<feature type="modified residue" description="Leucine amide" evidence="5">
    <location>
        <position position="62"/>
    </location>
</feature>
<proteinExistence type="evidence at protein level"/>
<keyword id="KW-0027">Amidation</keyword>
<keyword id="KW-0878">Amphibian defense peptide</keyword>
<keyword id="KW-0044">Antibiotic</keyword>
<keyword id="KW-0929">Antimicrobial</keyword>
<keyword id="KW-0165">Cleavage on pair of basic residues</keyword>
<keyword id="KW-0295">Fungicide</keyword>
<keyword id="KW-0391">Immunity</keyword>
<keyword id="KW-0399">Innate immunity</keyword>
<keyword id="KW-0964">Secreted</keyword>
<keyword id="KW-0732">Signal</keyword>
<accession>C5H0D9</accession>
<sequence>MFTLKKSLLLLFFLGTINLSLCEQERNAEEERRDDLGERQAEVEKRFFPIVGKLLFGLFGLLGK</sequence>
<reference key="1">
    <citation type="journal article" date="2010" name="Comp. Biochem. Physiol.">
        <title>Five novel antimicrobial peptides from skin secretions of the frog, Amolops loloensis.</title>
        <authorList>
            <person name="Wang M."/>
            <person name="Wang Y."/>
            <person name="Wang A."/>
            <person name="Song Y."/>
            <person name="Ma D."/>
            <person name="Yang H."/>
            <person name="Ma Y."/>
            <person name="Lai R."/>
        </authorList>
    </citation>
    <scope>NUCLEOTIDE SEQUENCE [MRNA]</scope>
    <scope>FUNCTION</scope>
    <scope>AMIDATION AT LEU-62</scope>
    <scope>SYNTHESIS OF 47-62</scope>
    <source>
        <tissue>Skin</tissue>
    </source>
</reference>